<gene>
    <name evidence="1" type="primary">proS</name>
    <name type="ordered locus">Aave_3670</name>
</gene>
<organism>
    <name type="scientific">Paracidovorax citrulli (strain AAC00-1)</name>
    <name type="common">Acidovorax citrulli</name>
    <dbReference type="NCBI Taxonomy" id="397945"/>
    <lineage>
        <taxon>Bacteria</taxon>
        <taxon>Pseudomonadati</taxon>
        <taxon>Pseudomonadota</taxon>
        <taxon>Betaproteobacteria</taxon>
        <taxon>Burkholderiales</taxon>
        <taxon>Comamonadaceae</taxon>
        <taxon>Paracidovorax</taxon>
    </lineage>
</organism>
<comment type="function">
    <text evidence="1">Catalyzes the attachment of proline to tRNA(Pro) in a two-step reaction: proline is first activated by ATP to form Pro-AMP and then transferred to the acceptor end of tRNA(Pro). As ProRS can inadvertently accommodate and process non-cognate amino acids such as alanine and cysteine, to avoid such errors it has two additional distinct editing activities against alanine. One activity is designated as 'pretransfer' editing and involves the tRNA(Pro)-independent hydrolysis of activated Ala-AMP. The other activity is designated 'posttransfer' editing and involves deacylation of mischarged Ala-tRNA(Pro). The misacylated Cys-tRNA(Pro) is not edited by ProRS.</text>
</comment>
<comment type="catalytic activity">
    <reaction evidence="1">
        <text>tRNA(Pro) + L-proline + ATP = L-prolyl-tRNA(Pro) + AMP + diphosphate</text>
        <dbReference type="Rhea" id="RHEA:14305"/>
        <dbReference type="Rhea" id="RHEA-COMP:9700"/>
        <dbReference type="Rhea" id="RHEA-COMP:9702"/>
        <dbReference type="ChEBI" id="CHEBI:30616"/>
        <dbReference type="ChEBI" id="CHEBI:33019"/>
        <dbReference type="ChEBI" id="CHEBI:60039"/>
        <dbReference type="ChEBI" id="CHEBI:78442"/>
        <dbReference type="ChEBI" id="CHEBI:78532"/>
        <dbReference type="ChEBI" id="CHEBI:456215"/>
        <dbReference type="EC" id="6.1.1.15"/>
    </reaction>
</comment>
<comment type="subunit">
    <text evidence="1">Homodimer.</text>
</comment>
<comment type="subcellular location">
    <subcellularLocation>
        <location evidence="1">Cytoplasm</location>
    </subcellularLocation>
</comment>
<comment type="domain">
    <text evidence="1">Consists of three domains: the N-terminal catalytic domain, the editing domain and the C-terminal anticodon-binding domain.</text>
</comment>
<comment type="similarity">
    <text evidence="1">Belongs to the class-II aminoacyl-tRNA synthetase family. ProS type 1 subfamily.</text>
</comment>
<evidence type="ECO:0000255" key="1">
    <source>
        <dbReference type="HAMAP-Rule" id="MF_01569"/>
    </source>
</evidence>
<protein>
    <recommendedName>
        <fullName evidence="1">Proline--tRNA ligase</fullName>
        <ecNumber evidence="1">6.1.1.15</ecNumber>
    </recommendedName>
    <alternativeName>
        <fullName evidence="1">Prolyl-tRNA synthetase</fullName>
        <shortName evidence="1">ProRS</shortName>
    </alternativeName>
</protein>
<accession>A1TTD0</accession>
<name>SYP_PARC0</name>
<proteinExistence type="inferred from homology"/>
<sequence>MKASQFFVSTLKEAPADAEVVSHKLMTRAGLIKKLGAGIYNYMPMGLRVIRKVEAIVREEMNRAGAVEVTMPVVQPAEYWQETGRFDKMGPELLRIRDRHGRDFVVQPTSEEVVTDIARQELRSYKQLPKNLYQIQTKFRDERRPRFGLMRGREFIMKDAYSFDRDQAAAKASYQVMAQAYRRIFDRFGLTYRAVAADSGAIGGDLSEEFQVIAATGEDAIVYCPQSDYAANMEKAEALPPQGPRPAASQALARTATPGKSTCADVAQLLGVPLQATVKSLVLATDETNESGEIVRSQVWLLLLRGDHDMNEIKVGKVPGLDAGFRFATVGEIEDHFGCRPGYLGPLNLRQPVRLVVDREVAVMADWICGANEVDFHMTGVNWGRDLPEPDVVADLRNVVAGDPSPDGKGTLAIERGIEVGHVFYLGTKYSRAMNATFLGEDGKPAFFEMGCYGIGITRLPAAAIEQNHDERGIIWPDAIAPFTVVVCPIGMDRSDEVRAAAEKLHADLLTAGVDVILDDRGERPGAMFADWELIGVPHRVVLSDRGLKEGQVEYQHRRDAAATKVASADIFAFIKDRIKV</sequence>
<feature type="chain" id="PRO_0000288304" description="Proline--tRNA ligase">
    <location>
        <begin position="1"/>
        <end position="581"/>
    </location>
</feature>
<dbReference type="EC" id="6.1.1.15" evidence="1"/>
<dbReference type="EMBL" id="CP000512">
    <property type="protein sequence ID" value="ABM34218.1"/>
    <property type="molecule type" value="Genomic_DNA"/>
</dbReference>
<dbReference type="RefSeq" id="WP_011796712.1">
    <property type="nucleotide sequence ID" value="NC_008752.1"/>
</dbReference>
<dbReference type="SMR" id="A1TTD0"/>
<dbReference type="STRING" id="397945.Aave_3670"/>
<dbReference type="GeneID" id="79791440"/>
<dbReference type="KEGG" id="aav:Aave_3670"/>
<dbReference type="eggNOG" id="COG0442">
    <property type="taxonomic scope" value="Bacteria"/>
</dbReference>
<dbReference type="HOGENOM" id="CLU_016739_0_0_4"/>
<dbReference type="OrthoDB" id="9809052at2"/>
<dbReference type="Proteomes" id="UP000002596">
    <property type="component" value="Chromosome"/>
</dbReference>
<dbReference type="GO" id="GO:0005829">
    <property type="term" value="C:cytosol"/>
    <property type="evidence" value="ECO:0007669"/>
    <property type="project" value="TreeGrafter"/>
</dbReference>
<dbReference type="GO" id="GO:0002161">
    <property type="term" value="F:aminoacyl-tRNA deacylase activity"/>
    <property type="evidence" value="ECO:0007669"/>
    <property type="project" value="InterPro"/>
</dbReference>
<dbReference type="GO" id="GO:0005524">
    <property type="term" value="F:ATP binding"/>
    <property type="evidence" value="ECO:0007669"/>
    <property type="project" value="UniProtKB-UniRule"/>
</dbReference>
<dbReference type="GO" id="GO:0004827">
    <property type="term" value="F:proline-tRNA ligase activity"/>
    <property type="evidence" value="ECO:0007669"/>
    <property type="project" value="UniProtKB-UniRule"/>
</dbReference>
<dbReference type="GO" id="GO:0006433">
    <property type="term" value="P:prolyl-tRNA aminoacylation"/>
    <property type="evidence" value="ECO:0007669"/>
    <property type="project" value="UniProtKB-UniRule"/>
</dbReference>
<dbReference type="CDD" id="cd04334">
    <property type="entry name" value="ProRS-INS"/>
    <property type="match status" value="1"/>
</dbReference>
<dbReference type="CDD" id="cd00861">
    <property type="entry name" value="ProRS_anticodon_short"/>
    <property type="match status" value="1"/>
</dbReference>
<dbReference type="CDD" id="cd00779">
    <property type="entry name" value="ProRS_core_prok"/>
    <property type="match status" value="1"/>
</dbReference>
<dbReference type="FunFam" id="3.30.930.10:FF:000042">
    <property type="entry name" value="probable proline--tRNA ligase, mitochondrial"/>
    <property type="match status" value="1"/>
</dbReference>
<dbReference type="Gene3D" id="3.40.50.800">
    <property type="entry name" value="Anticodon-binding domain"/>
    <property type="match status" value="1"/>
</dbReference>
<dbReference type="Gene3D" id="3.30.930.10">
    <property type="entry name" value="Bira Bifunctional Protein, Domain 2"/>
    <property type="match status" value="2"/>
</dbReference>
<dbReference type="Gene3D" id="3.90.960.10">
    <property type="entry name" value="YbaK/aminoacyl-tRNA synthetase-associated domain"/>
    <property type="match status" value="1"/>
</dbReference>
<dbReference type="HAMAP" id="MF_01569">
    <property type="entry name" value="Pro_tRNA_synth_type1"/>
    <property type="match status" value="1"/>
</dbReference>
<dbReference type="InterPro" id="IPR002314">
    <property type="entry name" value="aa-tRNA-synt_IIb"/>
</dbReference>
<dbReference type="InterPro" id="IPR006195">
    <property type="entry name" value="aa-tRNA-synth_II"/>
</dbReference>
<dbReference type="InterPro" id="IPR045864">
    <property type="entry name" value="aa-tRNA-synth_II/BPL/LPL"/>
</dbReference>
<dbReference type="InterPro" id="IPR004154">
    <property type="entry name" value="Anticodon-bd"/>
</dbReference>
<dbReference type="InterPro" id="IPR036621">
    <property type="entry name" value="Anticodon-bd_dom_sf"/>
</dbReference>
<dbReference type="InterPro" id="IPR002316">
    <property type="entry name" value="Pro-tRNA-ligase_IIa"/>
</dbReference>
<dbReference type="InterPro" id="IPR004500">
    <property type="entry name" value="Pro-tRNA-synth_IIa_bac-type"/>
</dbReference>
<dbReference type="InterPro" id="IPR023717">
    <property type="entry name" value="Pro-tRNA-Synthase_IIa_type1"/>
</dbReference>
<dbReference type="InterPro" id="IPR050062">
    <property type="entry name" value="Pro-tRNA_synthetase"/>
</dbReference>
<dbReference type="InterPro" id="IPR044140">
    <property type="entry name" value="ProRS_anticodon_short"/>
</dbReference>
<dbReference type="InterPro" id="IPR033730">
    <property type="entry name" value="ProRS_core_prok"/>
</dbReference>
<dbReference type="InterPro" id="IPR036754">
    <property type="entry name" value="YbaK/aa-tRNA-synt-asso_dom_sf"/>
</dbReference>
<dbReference type="InterPro" id="IPR007214">
    <property type="entry name" value="YbaK/aa-tRNA-synth-assoc-dom"/>
</dbReference>
<dbReference type="NCBIfam" id="NF006625">
    <property type="entry name" value="PRK09194.1"/>
    <property type="match status" value="1"/>
</dbReference>
<dbReference type="NCBIfam" id="TIGR00409">
    <property type="entry name" value="proS_fam_II"/>
    <property type="match status" value="1"/>
</dbReference>
<dbReference type="PANTHER" id="PTHR42753">
    <property type="entry name" value="MITOCHONDRIAL RIBOSOME PROTEIN L39/PROLYL-TRNA LIGASE FAMILY MEMBER"/>
    <property type="match status" value="1"/>
</dbReference>
<dbReference type="PANTHER" id="PTHR42753:SF2">
    <property type="entry name" value="PROLINE--TRNA LIGASE"/>
    <property type="match status" value="1"/>
</dbReference>
<dbReference type="Pfam" id="PF03129">
    <property type="entry name" value="HGTP_anticodon"/>
    <property type="match status" value="1"/>
</dbReference>
<dbReference type="Pfam" id="PF00587">
    <property type="entry name" value="tRNA-synt_2b"/>
    <property type="match status" value="1"/>
</dbReference>
<dbReference type="Pfam" id="PF04073">
    <property type="entry name" value="tRNA_edit"/>
    <property type="match status" value="1"/>
</dbReference>
<dbReference type="PIRSF" id="PIRSF001535">
    <property type="entry name" value="ProRS_1"/>
    <property type="match status" value="1"/>
</dbReference>
<dbReference type="PRINTS" id="PR01046">
    <property type="entry name" value="TRNASYNTHPRO"/>
</dbReference>
<dbReference type="SUPFAM" id="SSF52954">
    <property type="entry name" value="Class II aaRS ABD-related"/>
    <property type="match status" value="1"/>
</dbReference>
<dbReference type="SUPFAM" id="SSF55681">
    <property type="entry name" value="Class II aaRS and biotin synthetases"/>
    <property type="match status" value="1"/>
</dbReference>
<dbReference type="SUPFAM" id="SSF55826">
    <property type="entry name" value="YbaK/ProRS associated domain"/>
    <property type="match status" value="1"/>
</dbReference>
<dbReference type="PROSITE" id="PS50862">
    <property type="entry name" value="AA_TRNA_LIGASE_II"/>
    <property type="match status" value="1"/>
</dbReference>
<reference key="1">
    <citation type="submission" date="2006-12" db="EMBL/GenBank/DDBJ databases">
        <title>Complete sequence of Acidovorax avenae subsp. citrulli AAC00-1.</title>
        <authorList>
            <person name="Copeland A."/>
            <person name="Lucas S."/>
            <person name="Lapidus A."/>
            <person name="Barry K."/>
            <person name="Detter J.C."/>
            <person name="Glavina del Rio T."/>
            <person name="Dalin E."/>
            <person name="Tice H."/>
            <person name="Pitluck S."/>
            <person name="Kiss H."/>
            <person name="Brettin T."/>
            <person name="Bruce D."/>
            <person name="Han C."/>
            <person name="Tapia R."/>
            <person name="Gilna P."/>
            <person name="Schmutz J."/>
            <person name="Larimer F."/>
            <person name="Land M."/>
            <person name="Hauser L."/>
            <person name="Kyrpides N."/>
            <person name="Kim E."/>
            <person name="Stahl D."/>
            <person name="Richardson P."/>
        </authorList>
    </citation>
    <scope>NUCLEOTIDE SEQUENCE [LARGE SCALE GENOMIC DNA]</scope>
    <source>
        <strain>AAC00-1</strain>
    </source>
</reference>
<keyword id="KW-0030">Aminoacyl-tRNA synthetase</keyword>
<keyword id="KW-0067">ATP-binding</keyword>
<keyword id="KW-0963">Cytoplasm</keyword>
<keyword id="KW-0436">Ligase</keyword>
<keyword id="KW-0547">Nucleotide-binding</keyword>
<keyword id="KW-0648">Protein biosynthesis</keyword>